<protein>
    <recommendedName>
        <fullName evidence="1">ATP synthase subunit beta</fullName>
        <ecNumber evidence="1">7.1.2.2</ecNumber>
    </recommendedName>
    <alternativeName>
        <fullName evidence="1">ATP synthase F1 sector subunit beta</fullName>
    </alternativeName>
    <alternativeName>
        <fullName evidence="1">F-ATPase subunit beta</fullName>
    </alternativeName>
</protein>
<evidence type="ECO:0000255" key="1">
    <source>
        <dbReference type="HAMAP-Rule" id="MF_01347"/>
    </source>
</evidence>
<accession>B1X9W0</accession>
<organism>
    <name type="scientific">Escherichia coli (strain K12 / DH10B)</name>
    <dbReference type="NCBI Taxonomy" id="316385"/>
    <lineage>
        <taxon>Bacteria</taxon>
        <taxon>Pseudomonadati</taxon>
        <taxon>Pseudomonadota</taxon>
        <taxon>Gammaproteobacteria</taxon>
        <taxon>Enterobacterales</taxon>
        <taxon>Enterobacteriaceae</taxon>
        <taxon>Escherichia</taxon>
    </lineage>
</organism>
<name>ATPB_ECODH</name>
<keyword id="KW-0066">ATP synthesis</keyword>
<keyword id="KW-0067">ATP-binding</keyword>
<keyword id="KW-0997">Cell inner membrane</keyword>
<keyword id="KW-1003">Cell membrane</keyword>
<keyword id="KW-0139">CF(1)</keyword>
<keyword id="KW-0375">Hydrogen ion transport</keyword>
<keyword id="KW-0406">Ion transport</keyword>
<keyword id="KW-0472">Membrane</keyword>
<keyword id="KW-0547">Nucleotide-binding</keyword>
<keyword id="KW-1278">Translocase</keyword>
<keyword id="KW-0813">Transport</keyword>
<gene>
    <name evidence="1" type="primary">atpD</name>
    <name type="ordered locus">ECDH10B_3919</name>
</gene>
<proteinExistence type="inferred from homology"/>
<feature type="chain" id="PRO_1000143503" description="ATP synthase subunit beta">
    <location>
        <begin position="1"/>
        <end position="460"/>
    </location>
</feature>
<feature type="binding site" evidence="1">
    <location>
        <begin position="150"/>
        <end position="157"/>
    </location>
    <ligand>
        <name>ATP</name>
        <dbReference type="ChEBI" id="CHEBI:30616"/>
    </ligand>
</feature>
<reference key="1">
    <citation type="journal article" date="2008" name="J. Bacteriol.">
        <title>The complete genome sequence of Escherichia coli DH10B: insights into the biology of a laboratory workhorse.</title>
        <authorList>
            <person name="Durfee T."/>
            <person name="Nelson R."/>
            <person name="Baldwin S."/>
            <person name="Plunkett G. III"/>
            <person name="Burland V."/>
            <person name="Mau B."/>
            <person name="Petrosino J.F."/>
            <person name="Qin X."/>
            <person name="Muzny D.M."/>
            <person name="Ayele M."/>
            <person name="Gibbs R.A."/>
            <person name="Csorgo B."/>
            <person name="Posfai G."/>
            <person name="Weinstock G.M."/>
            <person name="Blattner F.R."/>
        </authorList>
    </citation>
    <scope>NUCLEOTIDE SEQUENCE [LARGE SCALE GENOMIC DNA]</scope>
    <source>
        <strain>K12 / DH10B</strain>
    </source>
</reference>
<dbReference type="EC" id="7.1.2.2" evidence="1"/>
<dbReference type="EMBL" id="CP000948">
    <property type="protein sequence ID" value="ACB04775.1"/>
    <property type="molecule type" value="Genomic_DNA"/>
</dbReference>
<dbReference type="RefSeq" id="WP_000190506.1">
    <property type="nucleotide sequence ID" value="NC_010473.1"/>
</dbReference>
<dbReference type="SMR" id="B1X9W0"/>
<dbReference type="GeneID" id="93778235"/>
<dbReference type="KEGG" id="ecd:ECDH10B_3919"/>
<dbReference type="HOGENOM" id="CLU_022398_0_2_6"/>
<dbReference type="GO" id="GO:0005886">
    <property type="term" value="C:plasma membrane"/>
    <property type="evidence" value="ECO:0007669"/>
    <property type="project" value="UniProtKB-SubCell"/>
</dbReference>
<dbReference type="GO" id="GO:0045259">
    <property type="term" value="C:proton-transporting ATP synthase complex"/>
    <property type="evidence" value="ECO:0007669"/>
    <property type="project" value="UniProtKB-KW"/>
</dbReference>
<dbReference type="GO" id="GO:0005524">
    <property type="term" value="F:ATP binding"/>
    <property type="evidence" value="ECO:0007669"/>
    <property type="project" value="UniProtKB-UniRule"/>
</dbReference>
<dbReference type="GO" id="GO:0016887">
    <property type="term" value="F:ATP hydrolysis activity"/>
    <property type="evidence" value="ECO:0007669"/>
    <property type="project" value="InterPro"/>
</dbReference>
<dbReference type="GO" id="GO:0046933">
    <property type="term" value="F:proton-transporting ATP synthase activity, rotational mechanism"/>
    <property type="evidence" value="ECO:0007669"/>
    <property type="project" value="UniProtKB-UniRule"/>
</dbReference>
<dbReference type="CDD" id="cd18110">
    <property type="entry name" value="ATP-synt_F1_beta_C"/>
    <property type="match status" value="1"/>
</dbReference>
<dbReference type="CDD" id="cd18115">
    <property type="entry name" value="ATP-synt_F1_beta_N"/>
    <property type="match status" value="1"/>
</dbReference>
<dbReference type="CDD" id="cd01133">
    <property type="entry name" value="F1-ATPase_beta_CD"/>
    <property type="match status" value="1"/>
</dbReference>
<dbReference type="FunFam" id="1.10.1140.10:FF:000001">
    <property type="entry name" value="ATP synthase subunit beta"/>
    <property type="match status" value="1"/>
</dbReference>
<dbReference type="FunFam" id="2.40.10.170:FF:000003">
    <property type="entry name" value="ATP synthase subunit beta"/>
    <property type="match status" value="1"/>
</dbReference>
<dbReference type="FunFam" id="3.40.50.300:FF:000004">
    <property type="entry name" value="ATP synthase subunit beta"/>
    <property type="match status" value="1"/>
</dbReference>
<dbReference type="Gene3D" id="2.40.10.170">
    <property type="match status" value="1"/>
</dbReference>
<dbReference type="Gene3D" id="1.10.1140.10">
    <property type="entry name" value="Bovine Mitochondrial F1-atpase, Atp Synthase Beta Chain, Chain D, domain 3"/>
    <property type="match status" value="1"/>
</dbReference>
<dbReference type="Gene3D" id="3.40.50.300">
    <property type="entry name" value="P-loop containing nucleotide triphosphate hydrolases"/>
    <property type="match status" value="1"/>
</dbReference>
<dbReference type="HAMAP" id="MF_01347">
    <property type="entry name" value="ATP_synth_beta_bact"/>
    <property type="match status" value="1"/>
</dbReference>
<dbReference type="InterPro" id="IPR003593">
    <property type="entry name" value="AAA+_ATPase"/>
</dbReference>
<dbReference type="InterPro" id="IPR055190">
    <property type="entry name" value="ATP-synt_VA_C"/>
</dbReference>
<dbReference type="InterPro" id="IPR005722">
    <property type="entry name" value="ATP_synth_F1_bsu"/>
</dbReference>
<dbReference type="InterPro" id="IPR020003">
    <property type="entry name" value="ATPase_a/bsu_AS"/>
</dbReference>
<dbReference type="InterPro" id="IPR050053">
    <property type="entry name" value="ATPase_alpha/beta_chains"/>
</dbReference>
<dbReference type="InterPro" id="IPR004100">
    <property type="entry name" value="ATPase_F1/V1/A1_a/bsu_N"/>
</dbReference>
<dbReference type="InterPro" id="IPR036121">
    <property type="entry name" value="ATPase_F1/V1/A1_a/bsu_N_sf"/>
</dbReference>
<dbReference type="InterPro" id="IPR000194">
    <property type="entry name" value="ATPase_F1/V1/A1_a/bsu_nucl-bd"/>
</dbReference>
<dbReference type="InterPro" id="IPR024034">
    <property type="entry name" value="ATPase_F1/V1_b/a_C"/>
</dbReference>
<dbReference type="InterPro" id="IPR027417">
    <property type="entry name" value="P-loop_NTPase"/>
</dbReference>
<dbReference type="NCBIfam" id="TIGR01039">
    <property type="entry name" value="atpD"/>
    <property type="match status" value="1"/>
</dbReference>
<dbReference type="PANTHER" id="PTHR15184">
    <property type="entry name" value="ATP SYNTHASE"/>
    <property type="match status" value="1"/>
</dbReference>
<dbReference type="PANTHER" id="PTHR15184:SF71">
    <property type="entry name" value="ATP SYNTHASE SUBUNIT BETA, MITOCHONDRIAL"/>
    <property type="match status" value="1"/>
</dbReference>
<dbReference type="Pfam" id="PF00006">
    <property type="entry name" value="ATP-synt_ab"/>
    <property type="match status" value="1"/>
</dbReference>
<dbReference type="Pfam" id="PF02874">
    <property type="entry name" value="ATP-synt_ab_N"/>
    <property type="match status" value="1"/>
</dbReference>
<dbReference type="Pfam" id="PF22919">
    <property type="entry name" value="ATP-synt_VA_C"/>
    <property type="match status" value="1"/>
</dbReference>
<dbReference type="SMART" id="SM00382">
    <property type="entry name" value="AAA"/>
    <property type="match status" value="1"/>
</dbReference>
<dbReference type="SUPFAM" id="SSF47917">
    <property type="entry name" value="C-terminal domain of alpha and beta subunits of F1 ATP synthase"/>
    <property type="match status" value="1"/>
</dbReference>
<dbReference type="SUPFAM" id="SSF50615">
    <property type="entry name" value="N-terminal domain of alpha and beta subunits of F1 ATP synthase"/>
    <property type="match status" value="1"/>
</dbReference>
<dbReference type="SUPFAM" id="SSF52540">
    <property type="entry name" value="P-loop containing nucleoside triphosphate hydrolases"/>
    <property type="match status" value="1"/>
</dbReference>
<dbReference type="PROSITE" id="PS00152">
    <property type="entry name" value="ATPASE_ALPHA_BETA"/>
    <property type="match status" value="1"/>
</dbReference>
<comment type="function">
    <text evidence="1">Produces ATP from ADP in the presence of a proton gradient across the membrane. The catalytic sites are hosted primarily by the beta subunits.</text>
</comment>
<comment type="catalytic activity">
    <reaction evidence="1">
        <text>ATP + H2O + 4 H(+)(in) = ADP + phosphate + 5 H(+)(out)</text>
        <dbReference type="Rhea" id="RHEA:57720"/>
        <dbReference type="ChEBI" id="CHEBI:15377"/>
        <dbReference type="ChEBI" id="CHEBI:15378"/>
        <dbReference type="ChEBI" id="CHEBI:30616"/>
        <dbReference type="ChEBI" id="CHEBI:43474"/>
        <dbReference type="ChEBI" id="CHEBI:456216"/>
        <dbReference type="EC" id="7.1.2.2"/>
    </reaction>
</comment>
<comment type="subunit">
    <text evidence="1">F-type ATPases have 2 components, CF(1) - the catalytic core - and CF(0) - the membrane proton channel. CF(1) has five subunits: alpha(3), beta(3), gamma(1), delta(1), epsilon(1). CF(0) has three main subunits: a(1), b(2) and c(9-12). The alpha and beta chains form an alternating ring which encloses part of the gamma chain. CF(1) is attached to CF(0) by a central stalk formed by the gamma and epsilon chains, while a peripheral stalk is formed by the delta and b chains.</text>
</comment>
<comment type="subcellular location">
    <subcellularLocation>
        <location evidence="1">Cell inner membrane</location>
        <topology evidence="1">Peripheral membrane protein</topology>
    </subcellularLocation>
</comment>
<comment type="similarity">
    <text evidence="1">Belongs to the ATPase alpha/beta chains family.</text>
</comment>
<sequence>MATGKIVQVIGAVVDVEFPQDAVPRVYDALEVQNGNERLVLEVQQQLGGGIVRTIAMGSSDGLRRGLDVKDLEHPIEVPVGKATLGRIMNVLGEPVDMKGEIGEEERWAIHRAAPSYEELSNSQELLETGIKVIDLMCPFAKGGKVGLFGGAGVGKTVNMMELIRNIAIEHSGYSVFAGVGERTREGNDFYHEMTDSNVIDKVSLVYGQMNEPPGNRLRVALTGLTMAEKFRDEGRDVLLFVDNIYRYTLAGTEVSALLGRMPSAVGYQPTLAEEMGVLQERITSTKTGSITSVQAVYVPADDLTDPSPATTFAHLDATVVLSRQIASLGIYPAVDPLDSTSRQLDPLVVGQEHYDTARGVQSILQRYQELKDIIAILGMDELSEEDKLVVARARKIQRFLSQPFFVAEVFTGSPGKYVSLKDTIRGFKGIMEGEYDHLPEQAFYMVGSIEEAVEKAKKL</sequence>